<accession>Q8QL24</accession>
<accession>Q5TJ87</accession>
<keyword id="KW-1185">Reference proteome</keyword>
<gene>
    <name type="ORF">417</name>
</gene>
<sequence length="417" mass="47666">MSSTCYPITSFGNLLNKIAKQSLISSQVWNEIVQDLYTAYSVYKYINTTLQYQLFYGNIYTLYDLFNNLDLYILNAKPYPFTPLIQARPGLPLTVNYMNNLINAITKVANENNIALAKPLNFVQSNEIVTSRKINDIIYAINQFLTFDYNTYFLLDCNGSLFNNLINSKSAFLNVLIDNPSQNISTNNIYIKNLIINYLNTFLNFYGSSAIDNLLVGKTYTNFGINTYDNSYIQKIIMYQLYGLIETYNNSYIQKIIVNELNGAIETNDNSYIDTIIVNQLNNAINAFDNSYIKTVIINQFNGSMYILSYIDTIIFTQLSIYLPINTGNHIGNLIINTNYGTVKIYDSTVLQNFIIDTNYQEIDIDEYAIIKNLIINTNYGTVKIYDNAIVENLICKQNYGQIQISGNAQVINNNCQ</sequence>
<organism>
    <name type="scientific">Sulfolobus islandicus rod-shaped virus 1</name>
    <name type="common">SIRV-1</name>
    <name type="synonym">Sulfolobus virus SIRV-1</name>
    <dbReference type="NCBI Taxonomy" id="157898"/>
    <lineage>
        <taxon>Viruses</taxon>
        <taxon>Adnaviria</taxon>
        <taxon>Zilligvirae</taxon>
        <taxon>Taleaviricota</taxon>
        <taxon>Tokiviricetes</taxon>
        <taxon>Ligamenvirales</taxon>
        <taxon>Rudiviridae</taxon>
        <taxon>Icerudivirus</taxon>
        <taxon>Icerudivirus SIRV1</taxon>
    </lineage>
</organism>
<name>Y417_SIRV1</name>
<reference key="1">
    <citation type="journal article" date="2001" name="Virology">
        <title>Sequences and replication of genomes of the archaeal rudiviruses SIRV1 and SIRV2: relationships to the archaeal lipothrixvirus SIFV and some eukaryal viruses.</title>
        <authorList>
            <person name="Peng X."/>
            <person name="Blum H."/>
            <person name="She Q."/>
            <person name="Mallok S."/>
            <person name="Bruegger K."/>
            <person name="Garrett R.A."/>
            <person name="Zillig W."/>
            <person name="Prangishvili D."/>
        </authorList>
    </citation>
    <scope>NUCLEOTIDE SEQUENCE [LARGE SCALE GENOMIC DNA]</scope>
    <source>
        <strain>Isolate variant VIII</strain>
    </source>
</reference>
<reference key="2">
    <citation type="journal article" date="2004" name="Mol. Microbiol.">
        <title>Multiple variants of the archaeal DNA rudivirus SIRV1 in a single host and a novel mechanism of genomic variation.</title>
        <authorList>
            <person name="Peng X."/>
            <person name="Kessler A."/>
            <person name="Phan H."/>
            <person name="Garrett R.A."/>
            <person name="Prangishvili D."/>
        </authorList>
    </citation>
    <scope>NUCLEOTIDE SEQUENCE [LARGE SCALE GENOMIC DNA]</scope>
    <source>
        <strain>Isolate variant XX</strain>
    </source>
</reference>
<protein>
    <recommendedName>
        <fullName>Uncharacterized protein 417</fullName>
    </recommendedName>
</protein>
<dbReference type="EMBL" id="AJ414696">
    <property type="protein sequence ID" value="CAC93987.1"/>
    <property type="molecule type" value="Genomic_DNA"/>
</dbReference>
<dbReference type="EMBL" id="AJ748296">
    <property type="protein sequence ID" value="CAG38851.1"/>
    <property type="molecule type" value="Genomic_DNA"/>
</dbReference>
<dbReference type="RefSeq" id="NP_666620.1">
    <property type="nucleotide sequence ID" value="NC_004087.1"/>
</dbReference>
<dbReference type="KEGG" id="vg:951396"/>
<dbReference type="OrthoDB" id="11997at10239"/>
<dbReference type="Proteomes" id="UP000002270">
    <property type="component" value="Genome"/>
</dbReference>
<dbReference type="Proteomes" id="UP000223181">
    <property type="component" value="Segment"/>
</dbReference>
<proteinExistence type="predicted"/>
<organismHost>
    <name type="scientific">Saccharolobus islandicus</name>
    <name type="common">Sulfolobus islandicus</name>
    <dbReference type="NCBI Taxonomy" id="43080"/>
</organismHost>
<feature type="chain" id="PRO_0000342304" description="Uncharacterized protein 417">
    <location>
        <begin position="1"/>
        <end position="417"/>
    </location>
</feature>
<feature type="sequence variant" description="In strain: Isolate variant XX.">
    <original>VKIY</original>
    <variation>PEIS</variation>
    <location>
        <begin position="343"/>
        <end position="346"/>
    </location>
</feature>